<dbReference type="EC" id="1.14.11.-" evidence="1"/>
<dbReference type="EMBL" id="CP001154">
    <property type="protein sequence ID" value="ACO73489.1"/>
    <property type="molecule type" value="Genomic_DNA"/>
</dbReference>
<dbReference type="RefSeq" id="WP_012695981.1">
    <property type="nucleotide sequence ID" value="NC_012559.1"/>
</dbReference>
<dbReference type="SMR" id="C1DC72"/>
<dbReference type="STRING" id="557598.LHK_00496"/>
<dbReference type="KEGG" id="lhk:LHK_00496"/>
<dbReference type="eggNOG" id="COG3128">
    <property type="taxonomic scope" value="Bacteria"/>
</dbReference>
<dbReference type="HOGENOM" id="CLU_106663_0_0_4"/>
<dbReference type="Proteomes" id="UP000002010">
    <property type="component" value="Chromosome"/>
</dbReference>
<dbReference type="GO" id="GO:0016706">
    <property type="term" value="F:2-oxoglutarate-dependent dioxygenase activity"/>
    <property type="evidence" value="ECO:0007669"/>
    <property type="project" value="UniProtKB-UniRule"/>
</dbReference>
<dbReference type="GO" id="GO:0005506">
    <property type="term" value="F:iron ion binding"/>
    <property type="evidence" value="ECO:0007669"/>
    <property type="project" value="UniProtKB-UniRule"/>
</dbReference>
<dbReference type="GO" id="GO:0031418">
    <property type="term" value="F:L-ascorbic acid binding"/>
    <property type="evidence" value="ECO:0007669"/>
    <property type="project" value="UniProtKB-KW"/>
</dbReference>
<dbReference type="GO" id="GO:0006974">
    <property type="term" value="P:DNA damage response"/>
    <property type="evidence" value="ECO:0007669"/>
    <property type="project" value="TreeGrafter"/>
</dbReference>
<dbReference type="GO" id="GO:0006879">
    <property type="term" value="P:intracellular iron ion homeostasis"/>
    <property type="evidence" value="ECO:0007669"/>
    <property type="project" value="TreeGrafter"/>
</dbReference>
<dbReference type="Gene3D" id="2.60.120.620">
    <property type="entry name" value="q2cbj1_9rhob like domain"/>
    <property type="match status" value="1"/>
</dbReference>
<dbReference type="Gene3D" id="4.10.860.20">
    <property type="entry name" value="Rabenosyn, Rab binding domain"/>
    <property type="match status" value="1"/>
</dbReference>
<dbReference type="HAMAP" id="MF_00657">
    <property type="entry name" value="Hydroxyl_YbiX"/>
    <property type="match status" value="1"/>
</dbReference>
<dbReference type="InterPro" id="IPR005123">
    <property type="entry name" value="Oxoglu/Fe-dep_dioxygenase_dom"/>
</dbReference>
<dbReference type="InterPro" id="IPR041097">
    <property type="entry name" value="PKHD_C"/>
</dbReference>
<dbReference type="InterPro" id="IPR023550">
    <property type="entry name" value="PKHD_hydroxylase"/>
</dbReference>
<dbReference type="InterPro" id="IPR006620">
    <property type="entry name" value="Pro_4_hyd_alph"/>
</dbReference>
<dbReference type="InterPro" id="IPR044862">
    <property type="entry name" value="Pro_4_hyd_alph_FE2OG_OXY"/>
</dbReference>
<dbReference type="NCBIfam" id="NF003973">
    <property type="entry name" value="PRK05467.1-2"/>
    <property type="match status" value="1"/>
</dbReference>
<dbReference type="NCBIfam" id="NF003974">
    <property type="entry name" value="PRK05467.1-3"/>
    <property type="match status" value="1"/>
</dbReference>
<dbReference type="NCBIfam" id="NF003975">
    <property type="entry name" value="PRK05467.1-4"/>
    <property type="match status" value="1"/>
</dbReference>
<dbReference type="PANTHER" id="PTHR41536">
    <property type="entry name" value="PKHD-TYPE HYDROXYLASE YBIX"/>
    <property type="match status" value="1"/>
</dbReference>
<dbReference type="PANTHER" id="PTHR41536:SF1">
    <property type="entry name" value="PKHD-TYPE HYDROXYLASE YBIX"/>
    <property type="match status" value="1"/>
</dbReference>
<dbReference type="Pfam" id="PF13640">
    <property type="entry name" value="2OG-FeII_Oxy_3"/>
    <property type="match status" value="1"/>
</dbReference>
<dbReference type="Pfam" id="PF18331">
    <property type="entry name" value="PKHD_C"/>
    <property type="match status" value="1"/>
</dbReference>
<dbReference type="SMART" id="SM00702">
    <property type="entry name" value="P4Hc"/>
    <property type="match status" value="1"/>
</dbReference>
<dbReference type="SUPFAM" id="SSF51197">
    <property type="entry name" value="Clavaminate synthase-like"/>
    <property type="match status" value="1"/>
</dbReference>
<dbReference type="PROSITE" id="PS51471">
    <property type="entry name" value="FE2OG_OXY"/>
    <property type="match status" value="1"/>
</dbReference>
<proteinExistence type="inferred from homology"/>
<sequence>MLLHIPHVLTREQVRACRARLDAADWADGRITAGSQSAQVKRNLQLPQSSPVAQELSAQVEQTLRQHPLFFSAALPKRFFPPLFNRYEGGMNFGNHVDNALRYLPGTTDAVRTDVSATLFLSDPDEYDGGELVVEDTYGVHSVKLPAGDIVVYPSTSLHRVEPVSRGARVASFMWIQSLVREDARRTLLFDMDMNIQRLRERHGDTEELVGLTSAYHNLLRLWAEV</sequence>
<comment type="cofactor">
    <cofactor evidence="1">
        <name>Fe(2+)</name>
        <dbReference type="ChEBI" id="CHEBI:29033"/>
    </cofactor>
    <text evidence="1">Binds 1 Fe(2+) ion per subunit.</text>
</comment>
<comment type="cofactor">
    <cofactor evidence="1">
        <name>L-ascorbate</name>
        <dbReference type="ChEBI" id="CHEBI:38290"/>
    </cofactor>
</comment>
<gene>
    <name type="ordered locus">LHK_00496</name>
</gene>
<accession>C1DC72</accession>
<organism>
    <name type="scientific">Laribacter hongkongensis (strain HLHK9)</name>
    <dbReference type="NCBI Taxonomy" id="557598"/>
    <lineage>
        <taxon>Bacteria</taxon>
        <taxon>Pseudomonadati</taxon>
        <taxon>Pseudomonadota</taxon>
        <taxon>Betaproteobacteria</taxon>
        <taxon>Neisseriales</taxon>
        <taxon>Aquaspirillaceae</taxon>
        <taxon>Laribacter</taxon>
    </lineage>
</organism>
<reference key="1">
    <citation type="journal article" date="2009" name="PLoS Genet.">
        <title>The complete genome and proteome of Laribacter hongkongensis reveal potential mechanisms for adaptations to different temperatures and habitats.</title>
        <authorList>
            <person name="Woo P.C.Y."/>
            <person name="Lau S.K.P."/>
            <person name="Tse H."/>
            <person name="Teng J.L.L."/>
            <person name="Curreem S.O."/>
            <person name="Tsang A.K.L."/>
            <person name="Fan R.Y.Y."/>
            <person name="Wong G.K.M."/>
            <person name="Huang Y."/>
            <person name="Loman N.J."/>
            <person name="Snyder L.A.S."/>
            <person name="Cai J.J."/>
            <person name="Huang J.-D."/>
            <person name="Mak W."/>
            <person name="Pallen M.J."/>
            <person name="Lok S."/>
            <person name="Yuen K.-Y."/>
        </authorList>
    </citation>
    <scope>NUCLEOTIDE SEQUENCE [LARGE SCALE GENOMIC DNA]</scope>
    <source>
        <strain>HLHK9</strain>
    </source>
</reference>
<keyword id="KW-0223">Dioxygenase</keyword>
<keyword id="KW-0408">Iron</keyword>
<keyword id="KW-0479">Metal-binding</keyword>
<keyword id="KW-0560">Oxidoreductase</keyword>
<keyword id="KW-1185">Reference proteome</keyword>
<keyword id="KW-0847">Vitamin C</keyword>
<evidence type="ECO:0000255" key="1">
    <source>
        <dbReference type="HAMAP-Rule" id="MF_00657"/>
    </source>
</evidence>
<feature type="chain" id="PRO_1000147527" description="PKHD-type hydroxylase LHK_00496">
    <location>
        <begin position="1"/>
        <end position="226"/>
    </location>
</feature>
<feature type="domain" description="Fe2OG dioxygenase" evidence="1">
    <location>
        <begin position="78"/>
        <end position="178"/>
    </location>
</feature>
<feature type="binding site" evidence="1">
    <location>
        <position position="96"/>
    </location>
    <ligand>
        <name>Fe cation</name>
        <dbReference type="ChEBI" id="CHEBI:24875"/>
    </ligand>
</feature>
<feature type="binding site" evidence="1">
    <location>
        <position position="98"/>
    </location>
    <ligand>
        <name>Fe cation</name>
        <dbReference type="ChEBI" id="CHEBI:24875"/>
    </ligand>
</feature>
<feature type="binding site" evidence="1">
    <location>
        <position position="159"/>
    </location>
    <ligand>
        <name>Fe cation</name>
        <dbReference type="ChEBI" id="CHEBI:24875"/>
    </ligand>
</feature>
<feature type="binding site" evidence="1">
    <location>
        <position position="169"/>
    </location>
    <ligand>
        <name>2-oxoglutarate</name>
        <dbReference type="ChEBI" id="CHEBI:16810"/>
    </ligand>
</feature>
<protein>
    <recommendedName>
        <fullName evidence="1">PKHD-type hydroxylase LHK_00496</fullName>
        <ecNumber evidence="1">1.14.11.-</ecNumber>
    </recommendedName>
</protein>
<name>Y496_LARHH</name>